<reference key="1">
    <citation type="submission" date="2001-04" db="EMBL/GenBank/DDBJ databases">
        <title>Independent duplication of the growth hormone gene in three Anthropoidean lineages.</title>
        <authorList>
            <person name="Revol A."/>
            <person name="Esquivel D."/>
            <person name="Santiago D."/>
            <person name="Barrera-Saldana H."/>
        </authorList>
    </citation>
    <scope>NUCLEOTIDE SEQUENCE [GENOMIC DNA]</scope>
</reference>
<comment type="function">
    <text evidence="1">Plays an important role in growth control. Its major role in stimulating body growth is to stimulate the liver and other tissues to secrete IGF1. It stimulates both the differentiation and proliferation of myoblasts. It also stimulates amino acid uptake and protein synthesis in muscle and other tissues (By similarity).</text>
</comment>
<comment type="subcellular location">
    <subcellularLocation>
        <location>Secreted</location>
    </subcellularLocation>
</comment>
<comment type="similarity">
    <text evidence="3">Belongs to the somatotropin/prolactin family.</text>
</comment>
<gene>
    <name type="primary">GH1</name>
</gene>
<name>SOMA_PANTR</name>
<feature type="signal peptide" evidence="1">
    <location>
        <begin position="1"/>
        <end position="26"/>
    </location>
</feature>
<feature type="chain" id="PRO_0000032996" description="Somatotropin">
    <location>
        <begin position="27"/>
        <end position="217"/>
    </location>
</feature>
<feature type="binding site" evidence="1">
    <location>
        <position position="44"/>
    </location>
    <ligand>
        <name>Zn(2+)</name>
        <dbReference type="ChEBI" id="CHEBI:29105"/>
    </ligand>
</feature>
<feature type="binding site" evidence="1">
    <location>
        <position position="200"/>
    </location>
    <ligand>
        <name>Zn(2+)</name>
        <dbReference type="ChEBI" id="CHEBI:29105"/>
    </ligand>
</feature>
<feature type="modified residue" description="Phosphoserine" evidence="2">
    <location>
        <position position="132"/>
    </location>
</feature>
<feature type="disulfide bond" evidence="1">
    <location>
        <begin position="79"/>
        <end position="191"/>
    </location>
</feature>
<feature type="disulfide bond" evidence="1">
    <location>
        <begin position="208"/>
        <end position="215"/>
    </location>
</feature>
<dbReference type="EMBL" id="AF374232">
    <property type="protein sequence ID" value="AAL72284.1"/>
    <property type="molecule type" value="Genomic_DNA"/>
</dbReference>
<dbReference type="RefSeq" id="NP_001184093.1">
    <property type="nucleotide sequence ID" value="NM_001197164.1"/>
</dbReference>
<dbReference type="BMRB" id="P58756"/>
<dbReference type="SMR" id="P58756"/>
<dbReference type="FunCoup" id="P58756">
    <property type="interactions" value="1012"/>
</dbReference>
<dbReference type="GeneID" id="454774"/>
<dbReference type="KEGG" id="ptr:454774"/>
<dbReference type="CTD" id="2688"/>
<dbReference type="InParanoid" id="P58756"/>
<dbReference type="OrthoDB" id="9608at9604"/>
<dbReference type="Proteomes" id="UP000002277">
    <property type="component" value="Unplaced"/>
</dbReference>
<dbReference type="GO" id="GO:0005615">
    <property type="term" value="C:extracellular space"/>
    <property type="evidence" value="ECO:0000318"/>
    <property type="project" value="GO_Central"/>
</dbReference>
<dbReference type="GO" id="GO:0008083">
    <property type="term" value="F:growth factor activity"/>
    <property type="evidence" value="ECO:0000318"/>
    <property type="project" value="GO_Central"/>
</dbReference>
<dbReference type="GO" id="GO:0005131">
    <property type="term" value="F:growth hormone receptor binding"/>
    <property type="evidence" value="ECO:0000318"/>
    <property type="project" value="GO_Central"/>
</dbReference>
<dbReference type="GO" id="GO:0005179">
    <property type="term" value="F:hormone activity"/>
    <property type="evidence" value="ECO:0000318"/>
    <property type="project" value="GO_Central"/>
</dbReference>
<dbReference type="GO" id="GO:0046872">
    <property type="term" value="F:metal ion binding"/>
    <property type="evidence" value="ECO:0007669"/>
    <property type="project" value="UniProtKB-KW"/>
</dbReference>
<dbReference type="GO" id="GO:0048513">
    <property type="term" value="P:animal organ development"/>
    <property type="evidence" value="ECO:0000318"/>
    <property type="project" value="GO_Central"/>
</dbReference>
<dbReference type="GO" id="GO:0060396">
    <property type="term" value="P:growth hormone receptor signaling pathway"/>
    <property type="evidence" value="ECO:0000318"/>
    <property type="project" value="GO_Central"/>
</dbReference>
<dbReference type="GO" id="GO:0046427">
    <property type="term" value="P:positive regulation of receptor signaling pathway via JAK-STAT"/>
    <property type="evidence" value="ECO:0000318"/>
    <property type="project" value="GO_Central"/>
</dbReference>
<dbReference type="GO" id="GO:0031667">
    <property type="term" value="P:response to nutrient levels"/>
    <property type="evidence" value="ECO:0000318"/>
    <property type="project" value="GO_Central"/>
</dbReference>
<dbReference type="CDD" id="cd10285">
    <property type="entry name" value="somatotropin_like"/>
    <property type="match status" value="1"/>
</dbReference>
<dbReference type="FunFam" id="1.20.1250.10:FF:000012">
    <property type="entry name" value="Growth hormone 1"/>
    <property type="match status" value="1"/>
</dbReference>
<dbReference type="Gene3D" id="1.20.1250.10">
    <property type="match status" value="1"/>
</dbReference>
<dbReference type="InterPro" id="IPR009079">
    <property type="entry name" value="4_helix_cytokine-like_core"/>
</dbReference>
<dbReference type="InterPro" id="IPR034975">
    <property type="entry name" value="Somatotropin"/>
</dbReference>
<dbReference type="InterPro" id="IPR001400">
    <property type="entry name" value="Somatotropin/Prolactin"/>
</dbReference>
<dbReference type="InterPro" id="IPR018116">
    <property type="entry name" value="Somatotropin_CS"/>
</dbReference>
<dbReference type="PANTHER" id="PTHR11417:SF2">
    <property type="entry name" value="SOMATOTROPIN"/>
    <property type="match status" value="1"/>
</dbReference>
<dbReference type="PANTHER" id="PTHR11417">
    <property type="entry name" value="SOMATOTROPIN,PROLACTIN"/>
    <property type="match status" value="1"/>
</dbReference>
<dbReference type="Pfam" id="PF00103">
    <property type="entry name" value="Hormone_1"/>
    <property type="match status" value="1"/>
</dbReference>
<dbReference type="PRINTS" id="PR00836">
    <property type="entry name" value="SOMATOTROPIN"/>
</dbReference>
<dbReference type="SUPFAM" id="SSF47266">
    <property type="entry name" value="4-helical cytokines"/>
    <property type="match status" value="1"/>
</dbReference>
<dbReference type="PROSITE" id="PS00266">
    <property type="entry name" value="SOMATOTROPIN_1"/>
    <property type="match status" value="1"/>
</dbReference>
<dbReference type="PROSITE" id="PS00338">
    <property type="entry name" value="SOMATOTROPIN_2"/>
    <property type="match status" value="1"/>
</dbReference>
<proteinExistence type="inferred from homology"/>
<evidence type="ECO:0000250" key="1"/>
<evidence type="ECO:0000250" key="2">
    <source>
        <dbReference type="UniProtKB" id="P01241"/>
    </source>
</evidence>
<evidence type="ECO:0000305" key="3"/>
<protein>
    <recommendedName>
        <fullName>Somatotropin</fullName>
    </recommendedName>
    <alternativeName>
        <fullName>Growth hormone</fullName>
        <shortName>GH</shortName>
        <shortName>GH-N</shortName>
    </alternativeName>
    <alternativeName>
        <fullName>Growth hormone 1</fullName>
    </alternativeName>
    <alternativeName>
        <fullName>Pituitary growth hormone</fullName>
    </alternativeName>
</protein>
<organism>
    <name type="scientific">Pan troglodytes</name>
    <name type="common">Chimpanzee</name>
    <dbReference type="NCBI Taxonomy" id="9598"/>
    <lineage>
        <taxon>Eukaryota</taxon>
        <taxon>Metazoa</taxon>
        <taxon>Chordata</taxon>
        <taxon>Craniata</taxon>
        <taxon>Vertebrata</taxon>
        <taxon>Euteleostomi</taxon>
        <taxon>Mammalia</taxon>
        <taxon>Eutheria</taxon>
        <taxon>Euarchontoglires</taxon>
        <taxon>Primates</taxon>
        <taxon>Haplorrhini</taxon>
        <taxon>Catarrhini</taxon>
        <taxon>Hominidae</taxon>
        <taxon>Pan</taxon>
    </lineage>
</organism>
<sequence length="217" mass="24843">MAPGSRTSLLLAFGLLCLPWLQEGSAFPTIPLSRLFDNAMLRAHRLHQLAFDTYQEFEEAYIPKEQKYSFLQNPQTSLCFSESIPTPSNREETQQKSNLELLRISLLLIQSWLEPVQFLRSVFANSLVYGASDSNVYDLLKDLEEGIQTLMGRLEDGSPRTGQIFKQTYSKFDTNSHNDDALLKNYGLLYCFRKDMDKVETFLRIVQCRSVEGSCGF</sequence>
<keyword id="KW-1015">Disulfide bond</keyword>
<keyword id="KW-0372">Hormone</keyword>
<keyword id="KW-0479">Metal-binding</keyword>
<keyword id="KW-0597">Phosphoprotein</keyword>
<keyword id="KW-1185">Reference proteome</keyword>
<keyword id="KW-0964">Secreted</keyword>
<keyword id="KW-0732">Signal</keyword>
<keyword id="KW-0862">Zinc</keyword>
<accession>P58756</accession>